<accession>A5CU44</accession>
<evidence type="ECO:0000255" key="1">
    <source>
        <dbReference type="HAMAP-Rule" id="MF_00558"/>
    </source>
</evidence>
<comment type="function">
    <text evidence="1">Succinyl-CoA synthetase functions in the citric acid cycle (TCA), coupling the hydrolysis of succinyl-CoA to the synthesis of either ATP or GTP and thus represents the only step of substrate-level phosphorylation in the TCA. The beta subunit provides nucleotide specificity of the enzyme and binds the substrate succinate, while the binding sites for coenzyme A and phosphate are found in the alpha subunit.</text>
</comment>
<comment type="catalytic activity">
    <reaction evidence="1">
        <text>succinate + ATP + CoA = succinyl-CoA + ADP + phosphate</text>
        <dbReference type="Rhea" id="RHEA:17661"/>
        <dbReference type="ChEBI" id="CHEBI:30031"/>
        <dbReference type="ChEBI" id="CHEBI:30616"/>
        <dbReference type="ChEBI" id="CHEBI:43474"/>
        <dbReference type="ChEBI" id="CHEBI:57287"/>
        <dbReference type="ChEBI" id="CHEBI:57292"/>
        <dbReference type="ChEBI" id="CHEBI:456216"/>
        <dbReference type="EC" id="6.2.1.5"/>
    </reaction>
    <physiologicalReaction direction="right-to-left" evidence="1">
        <dbReference type="Rhea" id="RHEA:17663"/>
    </physiologicalReaction>
</comment>
<comment type="catalytic activity">
    <reaction evidence="1">
        <text>GTP + succinate + CoA = succinyl-CoA + GDP + phosphate</text>
        <dbReference type="Rhea" id="RHEA:22120"/>
        <dbReference type="ChEBI" id="CHEBI:30031"/>
        <dbReference type="ChEBI" id="CHEBI:37565"/>
        <dbReference type="ChEBI" id="CHEBI:43474"/>
        <dbReference type="ChEBI" id="CHEBI:57287"/>
        <dbReference type="ChEBI" id="CHEBI:57292"/>
        <dbReference type="ChEBI" id="CHEBI:58189"/>
    </reaction>
    <physiologicalReaction direction="right-to-left" evidence="1">
        <dbReference type="Rhea" id="RHEA:22122"/>
    </physiologicalReaction>
</comment>
<comment type="cofactor">
    <cofactor evidence="1">
        <name>Mg(2+)</name>
        <dbReference type="ChEBI" id="CHEBI:18420"/>
    </cofactor>
    <text evidence="1">Binds 1 Mg(2+) ion per subunit.</text>
</comment>
<comment type="pathway">
    <text evidence="1">Carbohydrate metabolism; tricarboxylic acid cycle; succinate from succinyl-CoA (ligase route): step 1/1.</text>
</comment>
<comment type="subunit">
    <text evidence="1">Heterotetramer of two alpha and two beta subunits.</text>
</comment>
<comment type="similarity">
    <text evidence="1">Belongs to the succinate/malate CoA ligase beta subunit family.</text>
</comment>
<name>SUCC_CLAM3</name>
<gene>
    <name evidence="1" type="primary">sucC</name>
    <name type="ordered locus">CMM_2548</name>
</gene>
<dbReference type="EC" id="6.2.1.5" evidence="1"/>
<dbReference type="EMBL" id="AM711867">
    <property type="protein sequence ID" value="CAN02631.1"/>
    <property type="molecule type" value="Genomic_DNA"/>
</dbReference>
<dbReference type="RefSeq" id="WP_012039237.1">
    <property type="nucleotide sequence ID" value="NC_009480.1"/>
</dbReference>
<dbReference type="SMR" id="A5CU44"/>
<dbReference type="GeneID" id="92948551"/>
<dbReference type="KEGG" id="cmi:CMM_2548"/>
<dbReference type="eggNOG" id="COG0045">
    <property type="taxonomic scope" value="Bacteria"/>
</dbReference>
<dbReference type="HOGENOM" id="CLU_037430_0_2_11"/>
<dbReference type="OrthoDB" id="9802602at2"/>
<dbReference type="UniPathway" id="UPA00223">
    <property type="reaction ID" value="UER00999"/>
</dbReference>
<dbReference type="Proteomes" id="UP000001564">
    <property type="component" value="Chromosome"/>
</dbReference>
<dbReference type="GO" id="GO:0005829">
    <property type="term" value="C:cytosol"/>
    <property type="evidence" value="ECO:0007669"/>
    <property type="project" value="TreeGrafter"/>
</dbReference>
<dbReference type="GO" id="GO:0042709">
    <property type="term" value="C:succinate-CoA ligase complex"/>
    <property type="evidence" value="ECO:0007669"/>
    <property type="project" value="TreeGrafter"/>
</dbReference>
<dbReference type="GO" id="GO:0005524">
    <property type="term" value="F:ATP binding"/>
    <property type="evidence" value="ECO:0007669"/>
    <property type="project" value="UniProtKB-UniRule"/>
</dbReference>
<dbReference type="GO" id="GO:0000287">
    <property type="term" value="F:magnesium ion binding"/>
    <property type="evidence" value="ECO:0007669"/>
    <property type="project" value="UniProtKB-UniRule"/>
</dbReference>
<dbReference type="GO" id="GO:0004775">
    <property type="term" value="F:succinate-CoA ligase (ADP-forming) activity"/>
    <property type="evidence" value="ECO:0007669"/>
    <property type="project" value="UniProtKB-UniRule"/>
</dbReference>
<dbReference type="GO" id="GO:0004776">
    <property type="term" value="F:succinate-CoA ligase (GDP-forming) activity"/>
    <property type="evidence" value="ECO:0007669"/>
    <property type="project" value="RHEA"/>
</dbReference>
<dbReference type="GO" id="GO:0006104">
    <property type="term" value="P:succinyl-CoA metabolic process"/>
    <property type="evidence" value="ECO:0007669"/>
    <property type="project" value="TreeGrafter"/>
</dbReference>
<dbReference type="GO" id="GO:0006099">
    <property type="term" value="P:tricarboxylic acid cycle"/>
    <property type="evidence" value="ECO:0007669"/>
    <property type="project" value="UniProtKB-UniRule"/>
</dbReference>
<dbReference type="FunFam" id="3.30.1490.20:FF:000014">
    <property type="entry name" value="Succinate--CoA ligase [ADP-forming] subunit beta"/>
    <property type="match status" value="1"/>
</dbReference>
<dbReference type="FunFam" id="3.30.470.20:FF:000002">
    <property type="entry name" value="Succinate--CoA ligase [ADP-forming] subunit beta"/>
    <property type="match status" value="1"/>
</dbReference>
<dbReference type="FunFam" id="3.40.50.261:FF:000007">
    <property type="entry name" value="Succinate--CoA ligase [ADP-forming] subunit beta"/>
    <property type="match status" value="1"/>
</dbReference>
<dbReference type="Gene3D" id="3.30.1490.20">
    <property type="entry name" value="ATP-grasp fold, A domain"/>
    <property type="match status" value="1"/>
</dbReference>
<dbReference type="Gene3D" id="3.30.470.20">
    <property type="entry name" value="ATP-grasp fold, B domain"/>
    <property type="match status" value="1"/>
</dbReference>
<dbReference type="Gene3D" id="3.40.50.261">
    <property type="entry name" value="Succinyl-CoA synthetase domains"/>
    <property type="match status" value="1"/>
</dbReference>
<dbReference type="HAMAP" id="MF_00558">
    <property type="entry name" value="Succ_CoA_beta"/>
    <property type="match status" value="1"/>
</dbReference>
<dbReference type="InterPro" id="IPR011761">
    <property type="entry name" value="ATP-grasp"/>
</dbReference>
<dbReference type="InterPro" id="IPR013650">
    <property type="entry name" value="ATP-grasp_succ-CoA_synth-type"/>
</dbReference>
<dbReference type="InterPro" id="IPR013815">
    <property type="entry name" value="ATP_grasp_subdomain_1"/>
</dbReference>
<dbReference type="InterPro" id="IPR017866">
    <property type="entry name" value="Succ-CoA_synthase_bsu_CS"/>
</dbReference>
<dbReference type="InterPro" id="IPR005811">
    <property type="entry name" value="SUCC_ACL_C"/>
</dbReference>
<dbReference type="InterPro" id="IPR005809">
    <property type="entry name" value="Succ_CoA_ligase-like_bsu"/>
</dbReference>
<dbReference type="InterPro" id="IPR016102">
    <property type="entry name" value="Succinyl-CoA_synth-like"/>
</dbReference>
<dbReference type="NCBIfam" id="NF001913">
    <property type="entry name" value="PRK00696.1"/>
    <property type="match status" value="1"/>
</dbReference>
<dbReference type="NCBIfam" id="TIGR01016">
    <property type="entry name" value="sucCoAbeta"/>
    <property type="match status" value="1"/>
</dbReference>
<dbReference type="PANTHER" id="PTHR11815:SF10">
    <property type="entry name" value="SUCCINATE--COA LIGASE [GDP-FORMING] SUBUNIT BETA, MITOCHONDRIAL"/>
    <property type="match status" value="1"/>
</dbReference>
<dbReference type="PANTHER" id="PTHR11815">
    <property type="entry name" value="SUCCINYL-COA SYNTHETASE BETA CHAIN"/>
    <property type="match status" value="1"/>
</dbReference>
<dbReference type="Pfam" id="PF08442">
    <property type="entry name" value="ATP-grasp_2"/>
    <property type="match status" value="1"/>
</dbReference>
<dbReference type="Pfam" id="PF00549">
    <property type="entry name" value="Ligase_CoA"/>
    <property type="match status" value="1"/>
</dbReference>
<dbReference type="PIRSF" id="PIRSF001554">
    <property type="entry name" value="SucCS_beta"/>
    <property type="match status" value="1"/>
</dbReference>
<dbReference type="SUPFAM" id="SSF56059">
    <property type="entry name" value="Glutathione synthetase ATP-binding domain-like"/>
    <property type="match status" value="1"/>
</dbReference>
<dbReference type="SUPFAM" id="SSF52210">
    <property type="entry name" value="Succinyl-CoA synthetase domains"/>
    <property type="match status" value="1"/>
</dbReference>
<dbReference type="PROSITE" id="PS50975">
    <property type="entry name" value="ATP_GRASP"/>
    <property type="match status" value="1"/>
</dbReference>
<dbReference type="PROSITE" id="PS01217">
    <property type="entry name" value="SUCCINYL_COA_LIG_3"/>
    <property type="match status" value="1"/>
</dbReference>
<keyword id="KW-0067">ATP-binding</keyword>
<keyword id="KW-0436">Ligase</keyword>
<keyword id="KW-0460">Magnesium</keyword>
<keyword id="KW-0479">Metal-binding</keyword>
<keyword id="KW-0547">Nucleotide-binding</keyword>
<keyword id="KW-0816">Tricarboxylic acid cycle</keyword>
<reference key="1">
    <citation type="journal article" date="2008" name="J. Bacteriol.">
        <title>The genome sequence of the tomato-pathogenic actinomycete Clavibacter michiganensis subsp. michiganensis NCPPB382 reveals a large island involved in pathogenicity.</title>
        <authorList>
            <person name="Gartemann K.-H."/>
            <person name="Abt B."/>
            <person name="Bekel T."/>
            <person name="Burger A."/>
            <person name="Engemann J."/>
            <person name="Fluegel M."/>
            <person name="Gaigalat L."/>
            <person name="Goesmann A."/>
            <person name="Graefen I."/>
            <person name="Kalinowski J."/>
            <person name="Kaup O."/>
            <person name="Kirchner O."/>
            <person name="Krause L."/>
            <person name="Linke B."/>
            <person name="McHardy A."/>
            <person name="Meyer F."/>
            <person name="Pohle S."/>
            <person name="Rueckert C."/>
            <person name="Schneiker S."/>
            <person name="Zellermann E.-M."/>
            <person name="Puehler A."/>
            <person name="Eichenlaub R."/>
            <person name="Kaiser O."/>
            <person name="Bartels D."/>
        </authorList>
    </citation>
    <scope>NUCLEOTIDE SEQUENCE [LARGE SCALE GENOMIC DNA]</scope>
    <source>
        <strain>NCPPB 382</strain>
    </source>
</reference>
<feature type="chain" id="PRO_1000082065" description="Succinate--CoA ligase [ADP-forming] subunit beta">
    <location>
        <begin position="1"/>
        <end position="387"/>
    </location>
</feature>
<feature type="domain" description="ATP-grasp" evidence="1">
    <location>
        <begin position="9"/>
        <end position="236"/>
    </location>
</feature>
<feature type="binding site" evidence="1">
    <location>
        <position position="45"/>
    </location>
    <ligand>
        <name>ATP</name>
        <dbReference type="ChEBI" id="CHEBI:30616"/>
    </ligand>
</feature>
<feature type="binding site" evidence="1">
    <location>
        <begin position="52"/>
        <end position="54"/>
    </location>
    <ligand>
        <name>ATP</name>
        <dbReference type="ChEBI" id="CHEBI:30616"/>
    </ligand>
</feature>
<feature type="binding site" evidence="1">
    <location>
        <position position="94"/>
    </location>
    <ligand>
        <name>ATP</name>
        <dbReference type="ChEBI" id="CHEBI:30616"/>
    </ligand>
</feature>
<feature type="binding site" evidence="1">
    <location>
        <position position="99"/>
    </location>
    <ligand>
        <name>ATP</name>
        <dbReference type="ChEBI" id="CHEBI:30616"/>
    </ligand>
</feature>
<feature type="binding site" evidence="1">
    <location>
        <position position="191"/>
    </location>
    <ligand>
        <name>Mg(2+)</name>
        <dbReference type="ChEBI" id="CHEBI:18420"/>
    </ligand>
</feature>
<feature type="binding site" evidence="1">
    <location>
        <position position="205"/>
    </location>
    <ligand>
        <name>Mg(2+)</name>
        <dbReference type="ChEBI" id="CHEBI:18420"/>
    </ligand>
</feature>
<feature type="binding site" evidence="1">
    <location>
        <position position="256"/>
    </location>
    <ligand>
        <name>substrate</name>
        <note>ligand shared with subunit alpha</note>
    </ligand>
</feature>
<feature type="binding site" evidence="1">
    <location>
        <begin position="318"/>
        <end position="320"/>
    </location>
    <ligand>
        <name>substrate</name>
        <note>ligand shared with subunit alpha</note>
    </ligand>
</feature>
<protein>
    <recommendedName>
        <fullName evidence="1">Succinate--CoA ligase [ADP-forming] subunit beta</fullName>
        <ecNumber evidence="1">6.2.1.5</ecNumber>
    </recommendedName>
    <alternativeName>
        <fullName evidence="1">Succinyl-CoA synthetase subunit beta</fullName>
        <shortName evidence="1">SCS-beta</shortName>
    </alternativeName>
</protein>
<organism>
    <name type="scientific">Clavibacter michiganensis subsp. michiganensis (strain NCPPB 382)</name>
    <dbReference type="NCBI Taxonomy" id="443906"/>
    <lineage>
        <taxon>Bacteria</taxon>
        <taxon>Bacillati</taxon>
        <taxon>Actinomycetota</taxon>
        <taxon>Actinomycetes</taxon>
        <taxon>Micrococcales</taxon>
        <taxon>Microbacteriaceae</taxon>
        <taxon>Clavibacter</taxon>
    </lineage>
</organism>
<proteinExistence type="inferred from homology"/>
<sequence>MDLFEYQARDLFESYGVPVLPGIVADTAEEVRAAAEKLGGTVVVKAQVKTGGRGKAGGVKVAQSADAAFEAAEGILGLDIKGHTVHRVMVAAGARIAQEFYFSILLDRAERSYLCLASYEGGMEIEELAVTRPEALARIEIDPVAGIDAAKAEEIARAASFPEELIAKVAPVFERLWWVYRDEDATLVEVNPLVLTESGEIIALDGKVTLDENAGLRHEGHAALEDAAAADPLEAKAKESDLNYVKLDGQVGIIGNGAGLVMSTLDVVSYAGEQHGGVRPANFLDIGGGASAEVMAAGLDVILGDEQVTSVFVNVFGGITSCDAVANGIVGALDKLGDAATKPLVVRLDGNNVEEGRRILEERAHPLVTVVGTMDEAADKAAELAAA</sequence>